<name>NTA1_YEAST</name>
<sequence>MLIDAIHGAKMSTKLLVSLKVLVIQLNPQIGQVDQTIKRTWSILDKVTKSATYVKPDIILFPEFALTGYSFHARKDILPYVTKKDEGPSFELAKSISEKFQCYTIIGYPEDDDEQKLYNSALVVNPQGEQIFNYRKTFLYDTEMNWDCEENPEGFQTFPMDFSKCAKLSNEDSYNRDVTLKASIGICMDLSPYKFMAPFNHFEFSSFCVDNNVELILCPMAWLNSTSITDKQTLHNNSLLEAAKNKIAFALKEQGLPLAGSQGIYQLKIGDSQRTPRVPSDDSTSEYKDMDEPDMSNVNYWILRFFPFLYFKSRINWFKNSSLIESILGKTRMPLDHEYYKDGKHKEDTIDLLDSEEVIKDTVLEKTFLGTSLGQPWKFQGKNAILVLANRCGTEDGTTIFAGSSGIYKFNGKKPKGSQDDDESSLDSLNESVELLGNLGKGLEGAILREVQFEVFR</sequence>
<organism>
    <name type="scientific">Saccharomyces cerevisiae (strain ATCC 204508 / S288c)</name>
    <name type="common">Baker's yeast</name>
    <dbReference type="NCBI Taxonomy" id="559292"/>
    <lineage>
        <taxon>Eukaryota</taxon>
        <taxon>Fungi</taxon>
        <taxon>Dikarya</taxon>
        <taxon>Ascomycota</taxon>
        <taxon>Saccharomycotina</taxon>
        <taxon>Saccharomycetes</taxon>
        <taxon>Saccharomycetales</taxon>
        <taxon>Saccharomycetaceae</taxon>
        <taxon>Saccharomyces</taxon>
    </lineage>
</organism>
<protein>
    <recommendedName>
        <fullName>Protein N-terminal amidase</fullName>
        <shortName>NT-amidase</shortName>
        <ecNumber>3.5.1.-</ecNumber>
    </recommendedName>
</protein>
<reference key="1">
    <citation type="journal article" date="1995" name="J. Biol. Chem.">
        <title>Yeast N-terminal amidase. A new enzyme and component of the N-end rule pathway.</title>
        <authorList>
            <person name="Baker R.T."/>
            <person name="Varshavsky A."/>
        </authorList>
    </citation>
    <scope>NUCLEOTIDE SEQUENCE [GENOMIC DNA]</scope>
</reference>
<reference key="2">
    <citation type="journal article" date="1996" name="Yeast">
        <title>Analysis of a 62 kb DNA sequence of chromosome X reveals 36 open reading frames and a gene cluster with a counterpart on chromosome XI.</title>
        <authorList>
            <person name="Huang M.-E."/>
            <person name="Manus V."/>
            <person name="Chuat J.-C."/>
            <person name="Galibert F."/>
        </authorList>
    </citation>
    <scope>NUCLEOTIDE SEQUENCE [GENOMIC DNA]</scope>
    <source>
        <strain>ATCC 204508 / S288c</strain>
    </source>
</reference>
<reference key="3">
    <citation type="journal article" date="1996" name="EMBO J.">
        <title>Complete nucleotide sequence of Saccharomyces cerevisiae chromosome X.</title>
        <authorList>
            <person name="Galibert F."/>
            <person name="Alexandraki D."/>
            <person name="Baur A."/>
            <person name="Boles E."/>
            <person name="Chalwatzis N."/>
            <person name="Chuat J.-C."/>
            <person name="Coster F."/>
            <person name="Cziepluch C."/>
            <person name="de Haan M."/>
            <person name="Domdey H."/>
            <person name="Durand P."/>
            <person name="Entian K.-D."/>
            <person name="Gatius M."/>
            <person name="Goffeau A."/>
            <person name="Grivell L.A."/>
            <person name="Hennemann A."/>
            <person name="Herbert C.J."/>
            <person name="Heumann K."/>
            <person name="Hilger F."/>
            <person name="Hollenberg C.P."/>
            <person name="Huang M.-E."/>
            <person name="Jacq C."/>
            <person name="Jauniaux J.-C."/>
            <person name="Katsoulou C."/>
            <person name="Kirchrath L."/>
            <person name="Kleine K."/>
            <person name="Kordes E."/>
            <person name="Koetter P."/>
            <person name="Liebl S."/>
            <person name="Louis E.J."/>
            <person name="Manus V."/>
            <person name="Mewes H.-W."/>
            <person name="Miosga T."/>
            <person name="Obermaier B."/>
            <person name="Perea J."/>
            <person name="Pohl T.M."/>
            <person name="Portetelle D."/>
            <person name="Pujol A."/>
            <person name="Purnelle B."/>
            <person name="Ramezani Rad M."/>
            <person name="Rasmussen S.W."/>
            <person name="Rose M."/>
            <person name="Rossau R."/>
            <person name="Schaaff-Gerstenschlaeger I."/>
            <person name="Smits P.H.M."/>
            <person name="Scarcez T."/>
            <person name="Soriano N."/>
            <person name="To Van D."/>
            <person name="Tzermia M."/>
            <person name="Van Broekhoven A."/>
            <person name="Vandenbol M."/>
            <person name="Wedler H."/>
            <person name="von Wettstein D."/>
            <person name="Wambutt R."/>
            <person name="Zagulski M."/>
            <person name="Zollner A."/>
            <person name="Karpfinger-Hartl L."/>
        </authorList>
    </citation>
    <scope>NUCLEOTIDE SEQUENCE [LARGE SCALE GENOMIC DNA]</scope>
    <source>
        <strain>ATCC 204508 / S288c</strain>
    </source>
</reference>
<reference key="4">
    <citation type="journal article" date="2014" name="G3 (Bethesda)">
        <title>The reference genome sequence of Saccharomyces cerevisiae: Then and now.</title>
        <authorList>
            <person name="Engel S.R."/>
            <person name="Dietrich F.S."/>
            <person name="Fisk D.G."/>
            <person name="Binkley G."/>
            <person name="Balakrishnan R."/>
            <person name="Costanzo M.C."/>
            <person name="Dwight S.S."/>
            <person name="Hitz B.C."/>
            <person name="Karra K."/>
            <person name="Nash R.S."/>
            <person name="Weng S."/>
            <person name="Wong E.D."/>
            <person name="Lloyd P."/>
            <person name="Skrzypek M.S."/>
            <person name="Miyasato S.R."/>
            <person name="Simison M."/>
            <person name="Cherry J.M."/>
        </authorList>
    </citation>
    <scope>GENOME REANNOTATION</scope>
    <source>
        <strain>ATCC 204508 / S288c</strain>
    </source>
</reference>
<reference key="5">
    <citation type="journal article" date="2003" name="Nature">
        <title>Global analysis of protein expression in yeast.</title>
        <authorList>
            <person name="Ghaemmaghami S."/>
            <person name="Huh W.-K."/>
            <person name="Bower K."/>
            <person name="Howson R.W."/>
            <person name="Belle A."/>
            <person name="Dephoure N."/>
            <person name="O'Shea E.K."/>
            <person name="Weissman J.S."/>
        </authorList>
    </citation>
    <scope>LEVEL OF PROTEIN EXPRESSION [LARGE SCALE ANALYSIS]</scope>
</reference>
<dbReference type="EC" id="3.5.1.-"/>
<dbReference type="EMBL" id="L35564">
    <property type="protein sequence ID" value="AAB59320.1"/>
    <property type="molecule type" value="Genomic_DNA"/>
</dbReference>
<dbReference type="EMBL" id="Z49562">
    <property type="protein sequence ID" value="CAA89590.1"/>
    <property type="molecule type" value="Genomic_DNA"/>
</dbReference>
<dbReference type="EMBL" id="L47993">
    <property type="protein sequence ID" value="AAB39288.1"/>
    <property type="molecule type" value="Genomic_DNA"/>
</dbReference>
<dbReference type="EMBL" id="BK006943">
    <property type="protein sequence ID" value="DAA08849.1"/>
    <property type="molecule type" value="Genomic_DNA"/>
</dbReference>
<dbReference type="PIR" id="S47938">
    <property type="entry name" value="S47938"/>
</dbReference>
<dbReference type="RefSeq" id="NP_012596.3">
    <property type="nucleotide sequence ID" value="NM_001181720.3"/>
</dbReference>
<dbReference type="SMR" id="P40354"/>
<dbReference type="BioGRID" id="33819">
    <property type="interactions" value="51"/>
</dbReference>
<dbReference type="DIP" id="DIP-6478N"/>
<dbReference type="FunCoup" id="P40354">
    <property type="interactions" value="45"/>
</dbReference>
<dbReference type="IntAct" id="P40354">
    <property type="interactions" value="23"/>
</dbReference>
<dbReference type="STRING" id="4932.YJR062C"/>
<dbReference type="iPTMnet" id="P40354"/>
<dbReference type="PaxDb" id="4932-YJR062C"/>
<dbReference type="PeptideAtlas" id="P40354"/>
<dbReference type="EnsemblFungi" id="YJR062C_mRNA">
    <property type="protein sequence ID" value="YJR062C"/>
    <property type="gene ID" value="YJR062C"/>
</dbReference>
<dbReference type="GeneID" id="853525"/>
<dbReference type="KEGG" id="sce:YJR062C"/>
<dbReference type="AGR" id="SGD:S000003823"/>
<dbReference type="SGD" id="S000003823">
    <property type="gene designation" value="NTA1"/>
</dbReference>
<dbReference type="VEuPathDB" id="FungiDB:YJR062C"/>
<dbReference type="eggNOG" id="ENOG502QVBD">
    <property type="taxonomic scope" value="Eukaryota"/>
</dbReference>
<dbReference type="HOGENOM" id="CLU_009854_1_1_1"/>
<dbReference type="InParanoid" id="P40354"/>
<dbReference type="OMA" id="VKILCWD"/>
<dbReference type="OrthoDB" id="201515at2759"/>
<dbReference type="BioCyc" id="YEAST:G3O-31695-MONOMER"/>
<dbReference type="BRENDA" id="3.5.1.121">
    <property type="organism ID" value="984"/>
</dbReference>
<dbReference type="BRENDA" id="3.5.1.122">
    <property type="organism ID" value="984"/>
</dbReference>
<dbReference type="BioGRID-ORCS" id="853525">
    <property type="hits" value="0 hits in 10 CRISPR screens"/>
</dbReference>
<dbReference type="PRO" id="PR:P40354"/>
<dbReference type="Proteomes" id="UP000002311">
    <property type="component" value="Chromosome X"/>
</dbReference>
<dbReference type="RNAct" id="P40354">
    <property type="molecule type" value="protein"/>
</dbReference>
<dbReference type="GO" id="GO:0005739">
    <property type="term" value="C:mitochondrion"/>
    <property type="evidence" value="ECO:0007005"/>
    <property type="project" value="SGD"/>
</dbReference>
<dbReference type="GO" id="GO:0008418">
    <property type="term" value="F:protein-N-terminal asparagine amidohydrolase activity"/>
    <property type="evidence" value="ECO:0000314"/>
    <property type="project" value="SGD"/>
</dbReference>
<dbReference type="GO" id="GO:0070773">
    <property type="term" value="F:protein-N-terminal glutamine amidohydrolase activity"/>
    <property type="evidence" value="ECO:0000314"/>
    <property type="project" value="SGD"/>
</dbReference>
<dbReference type="GO" id="GO:0030163">
    <property type="term" value="P:protein catabolic process"/>
    <property type="evidence" value="ECO:0000315"/>
    <property type="project" value="SGD"/>
</dbReference>
<dbReference type="GO" id="GO:0036211">
    <property type="term" value="P:protein modification process"/>
    <property type="evidence" value="ECO:0000318"/>
    <property type="project" value="GO_Central"/>
</dbReference>
<dbReference type="CDD" id="cd07566">
    <property type="entry name" value="ScNTA1_like"/>
    <property type="match status" value="1"/>
</dbReference>
<dbReference type="FunFam" id="3.60.110.10:FF:000029">
    <property type="entry name" value="Protein N-terminal amidase"/>
    <property type="match status" value="1"/>
</dbReference>
<dbReference type="Gene3D" id="3.60.110.10">
    <property type="entry name" value="Carbon-nitrogen hydrolase"/>
    <property type="match status" value="1"/>
</dbReference>
<dbReference type="InterPro" id="IPR003010">
    <property type="entry name" value="C-N_Hydrolase"/>
</dbReference>
<dbReference type="InterPro" id="IPR036526">
    <property type="entry name" value="C-N_Hydrolase_sf"/>
</dbReference>
<dbReference type="InterPro" id="IPR039703">
    <property type="entry name" value="Nta1"/>
</dbReference>
<dbReference type="PANTHER" id="PTHR11750">
    <property type="entry name" value="PROTEIN N-TERMINAL AMIDASE"/>
    <property type="match status" value="1"/>
</dbReference>
<dbReference type="PANTHER" id="PTHR11750:SF26">
    <property type="entry name" value="PROTEIN N-TERMINAL AMIDASE"/>
    <property type="match status" value="1"/>
</dbReference>
<dbReference type="Pfam" id="PF00795">
    <property type="entry name" value="CN_hydrolase"/>
    <property type="match status" value="1"/>
</dbReference>
<dbReference type="SUPFAM" id="SSF56317">
    <property type="entry name" value="Carbon-nitrogen hydrolase"/>
    <property type="match status" value="1"/>
</dbReference>
<dbReference type="PROSITE" id="PS50263">
    <property type="entry name" value="CN_HYDROLASE"/>
    <property type="match status" value="1"/>
</dbReference>
<comment type="function">
    <text>Deamidates N-terminal Asn and Gln. Component of a targeting complex in the N-end rule pathway.</text>
</comment>
<comment type="miscellaneous">
    <text evidence="2">Present with 1640 molecules/cell in log phase SD medium.</text>
</comment>
<comment type="similarity">
    <text evidence="3">Belongs to the carbon-nitrogen hydrolase superfamily.</text>
</comment>
<comment type="caution">
    <text evidence="3">It is uncertain whether Met-1 or Met-11 is the initiator.</text>
</comment>
<gene>
    <name type="primary">NTA1</name>
    <name type="ordered locus">YJR062C</name>
    <name type="ORF">J1742</name>
</gene>
<accession>P40354</accession>
<accession>D6VWN3</accession>
<keyword id="KW-0378">Hydrolase</keyword>
<keyword id="KW-1185">Reference proteome</keyword>
<proteinExistence type="evidence at protein level"/>
<evidence type="ECO:0000255" key="1">
    <source>
        <dbReference type="PROSITE-ProRule" id="PRU00054"/>
    </source>
</evidence>
<evidence type="ECO:0000269" key="2">
    <source>
    </source>
</evidence>
<evidence type="ECO:0000305" key="3"/>
<feature type="chain" id="PRO_0000204068" description="Protein N-terminal amidase">
    <location>
        <begin position="1"/>
        <end position="457"/>
    </location>
</feature>
<feature type="domain" description="CN hydrolase" evidence="1">
    <location>
        <begin position="19"/>
        <end position="453"/>
    </location>
</feature>
<feature type="active site" description="Proton acceptor" evidence="1">
    <location>
        <position position="63"/>
    </location>
</feature>
<feature type="active site" description="Proton donor" evidence="1">
    <location>
        <position position="136"/>
    </location>
</feature>
<feature type="active site" description="Nucleophile" evidence="1">
    <location>
        <position position="187"/>
    </location>
</feature>